<protein>
    <recommendedName>
        <fullName>NADH-quinone oxidoreductase subunit H</fullName>
        <ecNumber>7.1.1.-</ecNumber>
    </recommendedName>
    <alternativeName>
        <fullName>NADH dehydrogenase I subunit H</fullName>
    </alternativeName>
    <alternativeName>
        <fullName>NDH-1 subunit H</fullName>
    </alternativeName>
    <alternativeName>
        <fullName>NUO8</fullName>
    </alternativeName>
</protein>
<organism>
    <name type="scientific">Escherichia coli O157:H7</name>
    <dbReference type="NCBI Taxonomy" id="83334"/>
    <lineage>
        <taxon>Bacteria</taxon>
        <taxon>Pseudomonadati</taxon>
        <taxon>Pseudomonadota</taxon>
        <taxon>Gammaproteobacteria</taxon>
        <taxon>Enterobacterales</taxon>
        <taxon>Enterobacteriaceae</taxon>
        <taxon>Escherichia</taxon>
    </lineage>
</organism>
<keyword id="KW-0997">Cell inner membrane</keyword>
<keyword id="KW-1003">Cell membrane</keyword>
<keyword id="KW-0472">Membrane</keyword>
<keyword id="KW-0520">NAD</keyword>
<keyword id="KW-0874">Quinone</keyword>
<keyword id="KW-1185">Reference proteome</keyword>
<keyword id="KW-1278">Translocase</keyword>
<keyword id="KW-0812">Transmembrane</keyword>
<keyword id="KW-1133">Transmembrane helix</keyword>
<keyword id="KW-0830">Ubiquinone</keyword>
<reference key="1">
    <citation type="journal article" date="2001" name="Nature">
        <title>Genome sequence of enterohaemorrhagic Escherichia coli O157:H7.</title>
        <authorList>
            <person name="Perna N.T."/>
            <person name="Plunkett G. III"/>
            <person name="Burland V."/>
            <person name="Mau B."/>
            <person name="Glasner J.D."/>
            <person name="Rose D.J."/>
            <person name="Mayhew G.F."/>
            <person name="Evans P.S."/>
            <person name="Gregor J."/>
            <person name="Kirkpatrick H.A."/>
            <person name="Posfai G."/>
            <person name="Hackett J."/>
            <person name="Klink S."/>
            <person name="Boutin A."/>
            <person name="Shao Y."/>
            <person name="Miller L."/>
            <person name="Grotbeck E.J."/>
            <person name="Davis N.W."/>
            <person name="Lim A."/>
            <person name="Dimalanta E.T."/>
            <person name="Potamousis K."/>
            <person name="Apodaca J."/>
            <person name="Anantharaman T.S."/>
            <person name="Lin J."/>
            <person name="Yen G."/>
            <person name="Schwartz D.C."/>
            <person name="Welch R.A."/>
            <person name="Blattner F.R."/>
        </authorList>
    </citation>
    <scope>NUCLEOTIDE SEQUENCE [LARGE SCALE GENOMIC DNA]</scope>
    <source>
        <strain>O157:H7 / EDL933 / ATCC 700927 / EHEC</strain>
    </source>
</reference>
<reference key="2">
    <citation type="journal article" date="2001" name="DNA Res.">
        <title>Complete genome sequence of enterohemorrhagic Escherichia coli O157:H7 and genomic comparison with a laboratory strain K-12.</title>
        <authorList>
            <person name="Hayashi T."/>
            <person name="Makino K."/>
            <person name="Ohnishi M."/>
            <person name="Kurokawa K."/>
            <person name="Ishii K."/>
            <person name="Yokoyama K."/>
            <person name="Han C.-G."/>
            <person name="Ohtsubo E."/>
            <person name="Nakayama K."/>
            <person name="Murata T."/>
            <person name="Tanaka M."/>
            <person name="Tobe T."/>
            <person name="Iida T."/>
            <person name="Takami H."/>
            <person name="Honda T."/>
            <person name="Sasakawa C."/>
            <person name="Ogasawara N."/>
            <person name="Yasunaga T."/>
            <person name="Kuhara S."/>
            <person name="Shiba T."/>
            <person name="Hattori M."/>
            <person name="Shinagawa H."/>
        </authorList>
    </citation>
    <scope>NUCLEOTIDE SEQUENCE [LARGE SCALE GENOMIC DNA]</scope>
    <source>
        <strain>O157:H7 / Sakai / RIMD 0509952 / EHEC</strain>
    </source>
</reference>
<dbReference type="EC" id="7.1.1.-"/>
<dbReference type="EMBL" id="AE005174">
    <property type="protein sequence ID" value="AAG57411.1"/>
    <property type="molecule type" value="Genomic_DNA"/>
</dbReference>
<dbReference type="EMBL" id="BA000007">
    <property type="protein sequence ID" value="BAB36589.1"/>
    <property type="molecule type" value="Genomic_DNA"/>
</dbReference>
<dbReference type="PIR" id="F91024">
    <property type="entry name" value="F91024"/>
</dbReference>
<dbReference type="PIR" id="G85868">
    <property type="entry name" value="G85868"/>
</dbReference>
<dbReference type="RefSeq" id="NP_311193.1">
    <property type="nucleotide sequence ID" value="NC_002695.1"/>
</dbReference>
<dbReference type="RefSeq" id="WP_000118507.1">
    <property type="nucleotide sequence ID" value="NZ_VOAI01000001.1"/>
</dbReference>
<dbReference type="SMR" id="P0AFD5"/>
<dbReference type="STRING" id="155864.Z3541"/>
<dbReference type="GeneID" id="916874"/>
<dbReference type="GeneID" id="93774892"/>
<dbReference type="KEGG" id="ece:Z3541"/>
<dbReference type="KEGG" id="ecs:ECs_3166"/>
<dbReference type="PATRIC" id="fig|386585.9.peg.3304"/>
<dbReference type="eggNOG" id="COG1005">
    <property type="taxonomic scope" value="Bacteria"/>
</dbReference>
<dbReference type="HOGENOM" id="CLU_015134_0_1_6"/>
<dbReference type="OMA" id="WSGWASN"/>
<dbReference type="Proteomes" id="UP000000558">
    <property type="component" value="Chromosome"/>
</dbReference>
<dbReference type="Proteomes" id="UP000002519">
    <property type="component" value="Chromosome"/>
</dbReference>
<dbReference type="GO" id="GO:0005886">
    <property type="term" value="C:plasma membrane"/>
    <property type="evidence" value="ECO:0007669"/>
    <property type="project" value="UniProtKB-SubCell"/>
</dbReference>
<dbReference type="GO" id="GO:0003954">
    <property type="term" value="F:NADH dehydrogenase activity"/>
    <property type="evidence" value="ECO:0007669"/>
    <property type="project" value="TreeGrafter"/>
</dbReference>
<dbReference type="GO" id="GO:0016655">
    <property type="term" value="F:oxidoreductase activity, acting on NAD(P)H, quinone or similar compound as acceptor"/>
    <property type="evidence" value="ECO:0007669"/>
    <property type="project" value="UniProtKB-UniRule"/>
</dbReference>
<dbReference type="GO" id="GO:0048038">
    <property type="term" value="F:quinone binding"/>
    <property type="evidence" value="ECO:0007669"/>
    <property type="project" value="UniProtKB-KW"/>
</dbReference>
<dbReference type="GO" id="GO:0009060">
    <property type="term" value="P:aerobic respiration"/>
    <property type="evidence" value="ECO:0007669"/>
    <property type="project" value="TreeGrafter"/>
</dbReference>
<dbReference type="HAMAP" id="MF_01350">
    <property type="entry name" value="NDH1_NuoH"/>
    <property type="match status" value="1"/>
</dbReference>
<dbReference type="InterPro" id="IPR001694">
    <property type="entry name" value="NADH_UbQ_OxRdtase_su1/FPO"/>
</dbReference>
<dbReference type="InterPro" id="IPR018086">
    <property type="entry name" value="NADH_UbQ_OxRdtase_su1_CS"/>
</dbReference>
<dbReference type="NCBIfam" id="NF004740">
    <property type="entry name" value="PRK06076.1-1"/>
    <property type="match status" value="1"/>
</dbReference>
<dbReference type="NCBIfam" id="NF004741">
    <property type="entry name" value="PRK06076.1-2"/>
    <property type="match status" value="1"/>
</dbReference>
<dbReference type="PANTHER" id="PTHR11432">
    <property type="entry name" value="NADH DEHYDROGENASE SUBUNIT 1"/>
    <property type="match status" value="1"/>
</dbReference>
<dbReference type="PANTHER" id="PTHR11432:SF3">
    <property type="entry name" value="NADH-UBIQUINONE OXIDOREDUCTASE CHAIN 1"/>
    <property type="match status" value="1"/>
</dbReference>
<dbReference type="Pfam" id="PF00146">
    <property type="entry name" value="NADHdh"/>
    <property type="match status" value="1"/>
</dbReference>
<dbReference type="PROSITE" id="PS00667">
    <property type="entry name" value="COMPLEX1_ND1_1"/>
    <property type="match status" value="1"/>
</dbReference>
<dbReference type="PROSITE" id="PS00668">
    <property type="entry name" value="COMPLEX1_ND1_2"/>
    <property type="match status" value="1"/>
</dbReference>
<accession>P0AFD5</accession>
<accession>P33603</accession>
<accession>P78307</accession>
<feature type="chain" id="PRO_0000117524" description="NADH-quinone oxidoreductase subunit H">
    <location>
        <begin position="1"/>
        <end position="325"/>
    </location>
</feature>
<feature type="transmembrane region" description="Helical" evidence="2">
    <location>
        <begin position="11"/>
        <end position="31"/>
    </location>
</feature>
<feature type="transmembrane region" description="Helical" evidence="2">
    <location>
        <begin position="81"/>
        <end position="101"/>
    </location>
</feature>
<feature type="transmembrane region" description="Helical" evidence="2">
    <location>
        <begin position="114"/>
        <end position="134"/>
    </location>
</feature>
<feature type="transmembrane region" description="Helical" evidence="2">
    <location>
        <begin position="154"/>
        <end position="174"/>
    </location>
</feature>
<feature type="transmembrane region" description="Helical" evidence="2">
    <location>
        <begin position="186"/>
        <end position="206"/>
    </location>
</feature>
<feature type="transmembrane region" description="Helical" evidence="2">
    <location>
        <begin position="237"/>
        <end position="257"/>
    </location>
</feature>
<feature type="transmembrane region" description="Helical" evidence="2">
    <location>
        <begin position="265"/>
        <end position="285"/>
    </location>
</feature>
<feature type="transmembrane region" description="Helical" evidence="2">
    <location>
        <begin position="304"/>
        <end position="324"/>
    </location>
</feature>
<sequence>MSWISPELIEILLTILKAVVILLVVVTCGAFMSFGERRLLGLFQNRYGPNRVGWGGSLQLVADMIKMFFKEDWIPKFSDRVIFTLAPMIAFTSLLLAFAIVPVSPGWVVADLNIGILFFLMMAGLAVYAVLFAGWSSNNKYSLLGAMRASAQTLSYEVFLGLSLMGVVAQAGSFNMTDIVNSQAHVWNVIPQFFGFITFAIAGVAVCHRHPFDQPEAEQELADGYHIEYSGMKFGLFFVGEYIGIVTISALMVTLFFGGWQGPLLPPFIWFALKTAFFMMMFILIRASLPRPRYDQVMSFGWKICLPLTLINLLVTAAVILWQAQ</sequence>
<gene>
    <name type="primary">nuoH</name>
    <name type="ordered locus">Z3541</name>
    <name type="ordered locus">ECs3166</name>
</gene>
<proteinExistence type="inferred from homology"/>
<name>NUOH_ECO57</name>
<comment type="function">
    <text evidence="1">NDH-1 shuttles electrons from NADH, via FMN and iron-sulfur (Fe-S) centers, to quinones in the respiratory chain. The immediate electron acceptor for the enzyme in this species is believed to be ubiquinone. Couples the redox reaction to proton translocation (for every two electrons transferred, four hydrogen ions are translocated across the cytoplasmic membrane), and thus conserves the redox energy in a proton gradient. This subunit may bind ubiquinone.</text>
</comment>
<comment type="catalytic activity">
    <reaction>
        <text>a quinone + NADH + 5 H(+)(in) = a quinol + NAD(+) + 4 H(+)(out)</text>
        <dbReference type="Rhea" id="RHEA:57888"/>
        <dbReference type="ChEBI" id="CHEBI:15378"/>
        <dbReference type="ChEBI" id="CHEBI:24646"/>
        <dbReference type="ChEBI" id="CHEBI:57540"/>
        <dbReference type="ChEBI" id="CHEBI:57945"/>
        <dbReference type="ChEBI" id="CHEBI:132124"/>
    </reaction>
</comment>
<comment type="subunit">
    <text evidence="1">NDH-1 is composed of 13 different subunits. Subunits NuoA, H, J, K, L, M, N constitute the membrane sector of the complex (By similarity).</text>
</comment>
<comment type="subcellular location">
    <subcellularLocation>
        <location evidence="1">Cell inner membrane</location>
        <topology evidence="1">Multi-pass membrane protein</topology>
    </subcellularLocation>
</comment>
<comment type="similarity">
    <text evidence="3">Belongs to the complex I subunit 1 family.</text>
</comment>
<evidence type="ECO:0000250" key="1"/>
<evidence type="ECO:0000255" key="2"/>
<evidence type="ECO:0000305" key="3"/>